<sequence>MSKNKLSKGQQRRVNANHQRRLKTSKEKPDYDDNLFGEPDEGIVISRFGMHADVESADGDVHRCNIRRTIRSLVTGDRVVWRPGKPAAEGVNVKGIVEAVHERTSVLTRPDFYDGVKPIAANIDQIVIVSAILPELSLNIIDRYLVACETLQIEPIIVLNKIDLLDDEGMAFVNEQMDIYRNIGYRVLMVSSHTQDGLKPLEEALTGRISIFAGQSGVGKSSLLNALLGLQKEILTNDISDNSGLGQHTTTAARLYHFPHGGDVIDSPGVREFGLWHLEPEQITQGFVEFHDYLGLCKYRDCKHDTDPGCAIREAVEEGKIAETRFENYHRILESMAQVKTRKNFSDTDD</sequence>
<comment type="function">
    <text evidence="1">One of several proteins that assist in the late maturation steps of the functional core of the 30S ribosomal subunit. Helps release RbfA from mature subunits. May play a role in the assembly of ribosomal proteins into the subunit. Circularly permuted GTPase that catalyzes slow GTP hydrolysis, GTPase activity is stimulated by the 30S ribosomal subunit.</text>
</comment>
<comment type="cofactor">
    <cofactor evidence="1">
        <name>Zn(2+)</name>
        <dbReference type="ChEBI" id="CHEBI:29105"/>
    </cofactor>
    <text evidence="1">Binds 1 zinc ion per subunit.</text>
</comment>
<comment type="subunit">
    <text evidence="1">Monomer. Associates with 30S ribosomal subunit, binds 16S rRNA.</text>
</comment>
<comment type="subcellular location">
    <subcellularLocation>
        <location evidence="1">Cytoplasm</location>
    </subcellularLocation>
</comment>
<comment type="similarity">
    <text evidence="1">Belongs to the TRAFAC class YlqF/YawG GTPase family. RsgA subfamily.</text>
</comment>
<name>RSGA_ECOBW</name>
<evidence type="ECO:0000255" key="1">
    <source>
        <dbReference type="HAMAP-Rule" id="MF_01820"/>
    </source>
</evidence>
<evidence type="ECO:0000255" key="2">
    <source>
        <dbReference type="PROSITE-ProRule" id="PRU01058"/>
    </source>
</evidence>
<evidence type="ECO:0000256" key="3">
    <source>
        <dbReference type="SAM" id="MobiDB-lite"/>
    </source>
</evidence>
<protein>
    <recommendedName>
        <fullName evidence="1">Small ribosomal subunit biogenesis GTPase RsgA</fullName>
        <ecNumber evidence="1">3.6.1.-</ecNumber>
    </recommendedName>
</protein>
<gene>
    <name evidence="1" type="primary">rsgA</name>
    <name type="ordered locus">BWG_3876</name>
</gene>
<proteinExistence type="inferred from homology"/>
<organism>
    <name type="scientific">Escherichia coli (strain K12 / MC4100 / BW2952)</name>
    <dbReference type="NCBI Taxonomy" id="595496"/>
    <lineage>
        <taxon>Bacteria</taxon>
        <taxon>Pseudomonadati</taxon>
        <taxon>Pseudomonadota</taxon>
        <taxon>Gammaproteobacteria</taxon>
        <taxon>Enterobacterales</taxon>
        <taxon>Enterobacteriaceae</taxon>
        <taxon>Escherichia</taxon>
    </lineage>
</organism>
<keyword id="KW-0963">Cytoplasm</keyword>
<keyword id="KW-0342">GTP-binding</keyword>
<keyword id="KW-0378">Hydrolase</keyword>
<keyword id="KW-0479">Metal-binding</keyword>
<keyword id="KW-0547">Nucleotide-binding</keyword>
<keyword id="KW-0690">Ribosome biogenesis</keyword>
<keyword id="KW-0694">RNA-binding</keyword>
<keyword id="KW-0699">rRNA-binding</keyword>
<keyword id="KW-0862">Zinc</keyword>
<accession>C5A1F5</accession>
<reference key="1">
    <citation type="journal article" date="2009" name="J. Bacteriol.">
        <title>Genomic sequencing reveals regulatory mutations and recombinational events in the widely used MC4100 lineage of Escherichia coli K-12.</title>
        <authorList>
            <person name="Ferenci T."/>
            <person name="Zhou Z."/>
            <person name="Betteridge T."/>
            <person name="Ren Y."/>
            <person name="Liu Y."/>
            <person name="Feng L."/>
            <person name="Reeves P.R."/>
            <person name="Wang L."/>
        </authorList>
    </citation>
    <scope>NUCLEOTIDE SEQUENCE [LARGE SCALE GENOMIC DNA]</scope>
    <source>
        <strain>K12 / MC4100 / BW2952</strain>
    </source>
</reference>
<dbReference type="EC" id="3.6.1.-" evidence="1"/>
<dbReference type="EMBL" id="CP001396">
    <property type="protein sequence ID" value="ACR65487.1"/>
    <property type="molecule type" value="Genomic_DNA"/>
</dbReference>
<dbReference type="RefSeq" id="WP_000041964.1">
    <property type="nucleotide sequence ID" value="NC_012759.1"/>
</dbReference>
<dbReference type="SMR" id="C5A1F5"/>
<dbReference type="KEGG" id="ebw:BWG_3876"/>
<dbReference type="HOGENOM" id="CLU_033617_2_0_6"/>
<dbReference type="GO" id="GO:0005737">
    <property type="term" value="C:cytoplasm"/>
    <property type="evidence" value="ECO:0007669"/>
    <property type="project" value="UniProtKB-SubCell"/>
</dbReference>
<dbReference type="GO" id="GO:0005525">
    <property type="term" value="F:GTP binding"/>
    <property type="evidence" value="ECO:0007669"/>
    <property type="project" value="UniProtKB-UniRule"/>
</dbReference>
<dbReference type="GO" id="GO:0003924">
    <property type="term" value="F:GTPase activity"/>
    <property type="evidence" value="ECO:0007669"/>
    <property type="project" value="UniProtKB-UniRule"/>
</dbReference>
<dbReference type="GO" id="GO:0046872">
    <property type="term" value="F:metal ion binding"/>
    <property type="evidence" value="ECO:0007669"/>
    <property type="project" value="UniProtKB-KW"/>
</dbReference>
<dbReference type="GO" id="GO:0019843">
    <property type="term" value="F:rRNA binding"/>
    <property type="evidence" value="ECO:0007669"/>
    <property type="project" value="UniProtKB-KW"/>
</dbReference>
<dbReference type="GO" id="GO:0042274">
    <property type="term" value="P:ribosomal small subunit biogenesis"/>
    <property type="evidence" value="ECO:0007669"/>
    <property type="project" value="UniProtKB-UniRule"/>
</dbReference>
<dbReference type="CDD" id="cd01854">
    <property type="entry name" value="YjeQ_EngC"/>
    <property type="match status" value="1"/>
</dbReference>
<dbReference type="FunFam" id="1.10.40.50:FF:000001">
    <property type="entry name" value="Small ribosomal subunit biogenesis GTPase RsgA"/>
    <property type="match status" value="1"/>
</dbReference>
<dbReference type="FunFam" id="2.40.50.140:FF:000122">
    <property type="entry name" value="Small ribosomal subunit biogenesis GTPase RsgA"/>
    <property type="match status" value="1"/>
</dbReference>
<dbReference type="FunFam" id="3.40.50.300:FF:000389">
    <property type="entry name" value="Small ribosomal subunit biogenesis GTPase RsgA"/>
    <property type="match status" value="1"/>
</dbReference>
<dbReference type="Gene3D" id="2.40.50.140">
    <property type="entry name" value="Nucleic acid-binding proteins"/>
    <property type="match status" value="1"/>
</dbReference>
<dbReference type="Gene3D" id="3.40.50.300">
    <property type="entry name" value="P-loop containing nucleotide triphosphate hydrolases"/>
    <property type="match status" value="1"/>
</dbReference>
<dbReference type="Gene3D" id="1.10.40.50">
    <property type="entry name" value="Probable gtpase engc, domain 3"/>
    <property type="match status" value="1"/>
</dbReference>
<dbReference type="HAMAP" id="MF_01820">
    <property type="entry name" value="GTPase_RsgA"/>
    <property type="match status" value="1"/>
</dbReference>
<dbReference type="InterPro" id="IPR030378">
    <property type="entry name" value="G_CP_dom"/>
</dbReference>
<dbReference type="InterPro" id="IPR012340">
    <property type="entry name" value="NA-bd_OB-fold"/>
</dbReference>
<dbReference type="InterPro" id="IPR027417">
    <property type="entry name" value="P-loop_NTPase"/>
</dbReference>
<dbReference type="InterPro" id="IPR004881">
    <property type="entry name" value="Ribosome_biogen_GTPase_RsgA"/>
</dbReference>
<dbReference type="InterPro" id="IPR010914">
    <property type="entry name" value="RsgA_GTPase_dom"/>
</dbReference>
<dbReference type="NCBIfam" id="NF008931">
    <property type="entry name" value="PRK12288.1"/>
    <property type="match status" value="1"/>
</dbReference>
<dbReference type="NCBIfam" id="TIGR00157">
    <property type="entry name" value="ribosome small subunit-dependent GTPase A"/>
    <property type="match status" value="1"/>
</dbReference>
<dbReference type="PANTHER" id="PTHR32120">
    <property type="entry name" value="SMALL RIBOSOMAL SUBUNIT BIOGENESIS GTPASE RSGA"/>
    <property type="match status" value="1"/>
</dbReference>
<dbReference type="PANTHER" id="PTHR32120:SF11">
    <property type="entry name" value="SMALL RIBOSOMAL SUBUNIT BIOGENESIS GTPASE RSGA 1, MITOCHONDRIAL-RELATED"/>
    <property type="match status" value="1"/>
</dbReference>
<dbReference type="Pfam" id="PF03193">
    <property type="entry name" value="RsgA_GTPase"/>
    <property type="match status" value="1"/>
</dbReference>
<dbReference type="SUPFAM" id="SSF52540">
    <property type="entry name" value="P-loop containing nucleoside triphosphate hydrolases"/>
    <property type="match status" value="1"/>
</dbReference>
<dbReference type="PROSITE" id="PS50936">
    <property type="entry name" value="ENGC_GTPASE"/>
    <property type="match status" value="1"/>
</dbReference>
<dbReference type="PROSITE" id="PS51721">
    <property type="entry name" value="G_CP"/>
    <property type="match status" value="1"/>
</dbReference>
<feature type="chain" id="PRO_1000216039" description="Small ribosomal subunit biogenesis GTPase RsgA">
    <location>
        <begin position="1"/>
        <end position="350"/>
    </location>
</feature>
<feature type="domain" description="CP-type G" evidence="2">
    <location>
        <begin position="104"/>
        <end position="273"/>
    </location>
</feature>
<feature type="region of interest" description="Disordered" evidence="3">
    <location>
        <begin position="1"/>
        <end position="33"/>
    </location>
</feature>
<feature type="compositionally biased region" description="Polar residues" evidence="3">
    <location>
        <begin position="1"/>
        <end position="17"/>
    </location>
</feature>
<feature type="binding site" evidence="1">
    <location>
        <begin position="160"/>
        <end position="163"/>
    </location>
    <ligand>
        <name>GTP</name>
        <dbReference type="ChEBI" id="CHEBI:37565"/>
    </ligand>
</feature>
<feature type="binding site" evidence="1">
    <location>
        <begin position="214"/>
        <end position="222"/>
    </location>
    <ligand>
        <name>GTP</name>
        <dbReference type="ChEBI" id="CHEBI:37565"/>
    </ligand>
</feature>
<feature type="binding site" evidence="1">
    <location>
        <position position="297"/>
    </location>
    <ligand>
        <name>Zn(2+)</name>
        <dbReference type="ChEBI" id="CHEBI:29105"/>
    </ligand>
</feature>
<feature type="binding site" evidence="1">
    <location>
        <position position="302"/>
    </location>
    <ligand>
        <name>Zn(2+)</name>
        <dbReference type="ChEBI" id="CHEBI:29105"/>
    </ligand>
</feature>
<feature type="binding site" evidence="1">
    <location>
        <position position="304"/>
    </location>
    <ligand>
        <name>Zn(2+)</name>
        <dbReference type="ChEBI" id="CHEBI:29105"/>
    </ligand>
</feature>
<feature type="binding site" evidence="1">
    <location>
        <position position="310"/>
    </location>
    <ligand>
        <name>Zn(2+)</name>
        <dbReference type="ChEBI" id="CHEBI:29105"/>
    </ligand>
</feature>